<sequence length="73" mass="8029">MKFLLSVIAGLLILALYLFWKVQPPVWIQVETNSSQLKQSVRMAGTTLQVKHMIKSDAGEETAVISNGISGLK</sequence>
<gene>
    <name type="primary">ywqO</name>
    <name type="ordered locus">BSU36140</name>
</gene>
<proteinExistence type="inferred from homology"/>
<dbReference type="EMBL" id="Z92952">
    <property type="protein sequence ID" value="CAB07452.1"/>
    <property type="molecule type" value="Genomic_DNA"/>
</dbReference>
<dbReference type="EMBL" id="Z93767">
    <property type="protein sequence ID" value="CAB07795.1"/>
    <property type="molecule type" value="Genomic_DNA"/>
</dbReference>
<dbReference type="EMBL" id="AL009126">
    <property type="protein sequence ID" value="CAB15631.1"/>
    <property type="molecule type" value="Genomic_DNA"/>
</dbReference>
<dbReference type="PIR" id="B70068">
    <property type="entry name" value="B70068"/>
</dbReference>
<dbReference type="RefSeq" id="NP_391495.1">
    <property type="nucleotide sequence ID" value="NC_000964.3"/>
</dbReference>
<dbReference type="RefSeq" id="WP_003243378.1">
    <property type="nucleotide sequence ID" value="NZ_OZ025638.1"/>
</dbReference>
<dbReference type="FunCoup" id="P96727">
    <property type="interactions" value="114"/>
</dbReference>
<dbReference type="STRING" id="224308.BSU36140"/>
<dbReference type="PaxDb" id="224308-BSU36140"/>
<dbReference type="EnsemblBacteria" id="CAB15631">
    <property type="protein sequence ID" value="CAB15631"/>
    <property type="gene ID" value="BSU_36140"/>
</dbReference>
<dbReference type="GeneID" id="936881"/>
<dbReference type="KEGG" id="bsu:BSU36140"/>
<dbReference type="PATRIC" id="fig|224308.179.peg.3911"/>
<dbReference type="InParanoid" id="P96727"/>
<dbReference type="OrthoDB" id="2909653at2"/>
<dbReference type="BioCyc" id="BSUB:BSU36140-MONOMER"/>
<dbReference type="Proteomes" id="UP000001570">
    <property type="component" value="Chromosome"/>
</dbReference>
<organism>
    <name type="scientific">Bacillus subtilis (strain 168)</name>
    <dbReference type="NCBI Taxonomy" id="224308"/>
    <lineage>
        <taxon>Bacteria</taxon>
        <taxon>Bacillati</taxon>
        <taxon>Bacillota</taxon>
        <taxon>Bacilli</taxon>
        <taxon>Bacillales</taxon>
        <taxon>Bacillaceae</taxon>
        <taxon>Bacillus</taxon>
    </lineage>
</organism>
<evidence type="ECO:0000255" key="1"/>
<feature type="signal peptide" evidence="1">
    <location>
        <begin position="1"/>
        <end position="28"/>
    </location>
</feature>
<feature type="chain" id="PRO_0000013740" description="Uncharacterized protein YwqO">
    <location>
        <begin position="29"/>
        <end position="73"/>
    </location>
</feature>
<keyword id="KW-1185">Reference proteome</keyword>
<keyword id="KW-0732">Signal</keyword>
<accession>P96727</accession>
<accession>O08076</accession>
<name>YWQO_BACSU</name>
<protein>
    <recommendedName>
        <fullName>Uncharacterized protein YwqO</fullName>
    </recommendedName>
</protein>
<reference key="1">
    <citation type="journal article" date="1997" name="Microbiology">
        <title>The Bacillus subtilis genome from gerBC (311 degrees) to licR (334 degrees).</title>
        <authorList>
            <person name="Presecan E."/>
            <person name="Moszer I."/>
            <person name="Boursier L."/>
            <person name="Cruz Ramos H."/>
            <person name="De La Fuente V."/>
            <person name="Hullo M.-F."/>
            <person name="Lelong C."/>
            <person name="Schleich S."/>
            <person name="Sekowska A."/>
            <person name="Song B.H."/>
            <person name="Villani G."/>
            <person name="Kunst F."/>
            <person name="Danchin A."/>
            <person name="Glaser P."/>
        </authorList>
    </citation>
    <scope>NUCLEOTIDE SEQUENCE [GENOMIC DNA]</scope>
    <source>
        <strain>168</strain>
    </source>
</reference>
<reference key="2">
    <citation type="journal article" date="1997" name="Nature">
        <title>The complete genome sequence of the Gram-positive bacterium Bacillus subtilis.</title>
        <authorList>
            <person name="Kunst F."/>
            <person name="Ogasawara N."/>
            <person name="Moszer I."/>
            <person name="Albertini A.M."/>
            <person name="Alloni G."/>
            <person name="Azevedo V."/>
            <person name="Bertero M.G."/>
            <person name="Bessieres P."/>
            <person name="Bolotin A."/>
            <person name="Borchert S."/>
            <person name="Borriss R."/>
            <person name="Boursier L."/>
            <person name="Brans A."/>
            <person name="Braun M."/>
            <person name="Brignell S.C."/>
            <person name="Bron S."/>
            <person name="Brouillet S."/>
            <person name="Bruschi C.V."/>
            <person name="Caldwell B."/>
            <person name="Capuano V."/>
            <person name="Carter N.M."/>
            <person name="Choi S.-K."/>
            <person name="Codani J.-J."/>
            <person name="Connerton I.F."/>
            <person name="Cummings N.J."/>
            <person name="Daniel R.A."/>
            <person name="Denizot F."/>
            <person name="Devine K.M."/>
            <person name="Duesterhoeft A."/>
            <person name="Ehrlich S.D."/>
            <person name="Emmerson P.T."/>
            <person name="Entian K.-D."/>
            <person name="Errington J."/>
            <person name="Fabret C."/>
            <person name="Ferrari E."/>
            <person name="Foulger D."/>
            <person name="Fritz C."/>
            <person name="Fujita M."/>
            <person name="Fujita Y."/>
            <person name="Fuma S."/>
            <person name="Galizzi A."/>
            <person name="Galleron N."/>
            <person name="Ghim S.-Y."/>
            <person name="Glaser P."/>
            <person name="Goffeau A."/>
            <person name="Golightly E.J."/>
            <person name="Grandi G."/>
            <person name="Guiseppi G."/>
            <person name="Guy B.J."/>
            <person name="Haga K."/>
            <person name="Haiech J."/>
            <person name="Harwood C.R."/>
            <person name="Henaut A."/>
            <person name="Hilbert H."/>
            <person name="Holsappel S."/>
            <person name="Hosono S."/>
            <person name="Hullo M.-F."/>
            <person name="Itaya M."/>
            <person name="Jones L.-M."/>
            <person name="Joris B."/>
            <person name="Karamata D."/>
            <person name="Kasahara Y."/>
            <person name="Klaerr-Blanchard M."/>
            <person name="Klein C."/>
            <person name="Kobayashi Y."/>
            <person name="Koetter P."/>
            <person name="Koningstein G."/>
            <person name="Krogh S."/>
            <person name="Kumano M."/>
            <person name="Kurita K."/>
            <person name="Lapidus A."/>
            <person name="Lardinois S."/>
            <person name="Lauber J."/>
            <person name="Lazarevic V."/>
            <person name="Lee S.-M."/>
            <person name="Levine A."/>
            <person name="Liu H."/>
            <person name="Masuda S."/>
            <person name="Mauel C."/>
            <person name="Medigue C."/>
            <person name="Medina N."/>
            <person name="Mellado R.P."/>
            <person name="Mizuno M."/>
            <person name="Moestl D."/>
            <person name="Nakai S."/>
            <person name="Noback M."/>
            <person name="Noone D."/>
            <person name="O'Reilly M."/>
            <person name="Ogawa K."/>
            <person name="Ogiwara A."/>
            <person name="Oudega B."/>
            <person name="Park S.-H."/>
            <person name="Parro V."/>
            <person name="Pohl T.M."/>
            <person name="Portetelle D."/>
            <person name="Porwollik S."/>
            <person name="Prescott A.M."/>
            <person name="Presecan E."/>
            <person name="Pujic P."/>
            <person name="Purnelle B."/>
            <person name="Rapoport G."/>
            <person name="Rey M."/>
            <person name="Reynolds S."/>
            <person name="Rieger M."/>
            <person name="Rivolta C."/>
            <person name="Rocha E."/>
            <person name="Roche B."/>
            <person name="Rose M."/>
            <person name="Sadaie Y."/>
            <person name="Sato T."/>
            <person name="Scanlan E."/>
            <person name="Schleich S."/>
            <person name="Schroeter R."/>
            <person name="Scoffone F."/>
            <person name="Sekiguchi J."/>
            <person name="Sekowska A."/>
            <person name="Seror S.J."/>
            <person name="Serror P."/>
            <person name="Shin B.-S."/>
            <person name="Soldo B."/>
            <person name="Sorokin A."/>
            <person name="Tacconi E."/>
            <person name="Takagi T."/>
            <person name="Takahashi H."/>
            <person name="Takemaru K."/>
            <person name="Takeuchi M."/>
            <person name="Tamakoshi A."/>
            <person name="Tanaka T."/>
            <person name="Terpstra P."/>
            <person name="Tognoni A."/>
            <person name="Tosato V."/>
            <person name="Uchiyama S."/>
            <person name="Vandenbol M."/>
            <person name="Vannier F."/>
            <person name="Vassarotti A."/>
            <person name="Viari A."/>
            <person name="Wambutt R."/>
            <person name="Wedler E."/>
            <person name="Wedler H."/>
            <person name="Weitzenegger T."/>
            <person name="Winters P."/>
            <person name="Wipat A."/>
            <person name="Yamamoto H."/>
            <person name="Yamane K."/>
            <person name="Yasumoto K."/>
            <person name="Yata K."/>
            <person name="Yoshida K."/>
            <person name="Yoshikawa H.-F."/>
            <person name="Zumstein E."/>
            <person name="Yoshikawa H."/>
            <person name="Danchin A."/>
        </authorList>
    </citation>
    <scope>NUCLEOTIDE SEQUENCE [LARGE SCALE GENOMIC DNA]</scope>
    <source>
        <strain>168</strain>
    </source>
</reference>